<proteinExistence type="inferred from homology"/>
<evidence type="ECO:0000255" key="1">
    <source>
        <dbReference type="HAMAP-Rule" id="MF_00248"/>
    </source>
</evidence>
<name>HSLV_ANASK</name>
<accession>B4UIH9</accession>
<keyword id="KW-0021">Allosteric enzyme</keyword>
<keyword id="KW-0963">Cytoplasm</keyword>
<keyword id="KW-0378">Hydrolase</keyword>
<keyword id="KW-0479">Metal-binding</keyword>
<keyword id="KW-0645">Protease</keyword>
<keyword id="KW-0915">Sodium</keyword>
<keyword id="KW-0888">Threonine protease</keyword>
<comment type="function">
    <text evidence="1">Protease subunit of a proteasome-like degradation complex believed to be a general protein degrading machinery.</text>
</comment>
<comment type="catalytic activity">
    <reaction evidence="1">
        <text>ATP-dependent cleavage of peptide bonds with broad specificity.</text>
        <dbReference type="EC" id="3.4.25.2"/>
    </reaction>
</comment>
<comment type="activity regulation">
    <text evidence="1">Allosterically activated by HslU binding.</text>
</comment>
<comment type="subunit">
    <text evidence="1">A double ring-shaped homohexamer of HslV is capped on each side by a ring-shaped HslU homohexamer. The assembly of the HslU/HslV complex is dependent on binding of ATP.</text>
</comment>
<comment type="subcellular location">
    <subcellularLocation>
        <location evidence="1">Cytoplasm</location>
    </subcellularLocation>
</comment>
<comment type="similarity">
    <text evidence="1">Belongs to the peptidase T1B family. HslV subfamily.</text>
</comment>
<protein>
    <recommendedName>
        <fullName evidence="1">ATP-dependent protease subunit HslV</fullName>
        <ecNumber evidence="1">3.4.25.2</ecNumber>
    </recommendedName>
</protein>
<gene>
    <name evidence="1" type="primary">hslV</name>
    <name type="ordered locus">AnaeK_2787</name>
</gene>
<reference key="1">
    <citation type="submission" date="2008-08" db="EMBL/GenBank/DDBJ databases">
        <title>Complete sequence of Anaeromyxobacter sp. K.</title>
        <authorList>
            <consortium name="US DOE Joint Genome Institute"/>
            <person name="Lucas S."/>
            <person name="Copeland A."/>
            <person name="Lapidus A."/>
            <person name="Glavina del Rio T."/>
            <person name="Dalin E."/>
            <person name="Tice H."/>
            <person name="Bruce D."/>
            <person name="Goodwin L."/>
            <person name="Pitluck S."/>
            <person name="Saunders E."/>
            <person name="Brettin T."/>
            <person name="Detter J.C."/>
            <person name="Han C."/>
            <person name="Larimer F."/>
            <person name="Land M."/>
            <person name="Hauser L."/>
            <person name="Kyrpides N."/>
            <person name="Ovchinnikiva G."/>
            <person name="Beliaev A."/>
        </authorList>
    </citation>
    <scope>NUCLEOTIDE SEQUENCE [LARGE SCALE GENOMIC DNA]</scope>
    <source>
        <strain>K</strain>
    </source>
</reference>
<sequence>MRPMHGTTVLCVRREGRVVIAGDGQVTLDKTVMKATARKVRRLGEGQVVAGFAGATADAFQLFELFEKKLKEHARSLPRAAVELAKQWRTDRMLRRLEALLLVADREHLLVLSGAGDVIEPDPVANGAAAAIGSGGPYALAAARALLAHSALDARQVAEEAMKLAAEICIYTNGNLTIEEL</sequence>
<organism>
    <name type="scientific">Anaeromyxobacter sp. (strain K)</name>
    <dbReference type="NCBI Taxonomy" id="447217"/>
    <lineage>
        <taxon>Bacteria</taxon>
        <taxon>Pseudomonadati</taxon>
        <taxon>Myxococcota</taxon>
        <taxon>Myxococcia</taxon>
        <taxon>Myxococcales</taxon>
        <taxon>Cystobacterineae</taxon>
        <taxon>Anaeromyxobacteraceae</taxon>
        <taxon>Anaeromyxobacter</taxon>
    </lineage>
</organism>
<dbReference type="EC" id="3.4.25.2" evidence="1"/>
<dbReference type="EMBL" id="CP001131">
    <property type="protein sequence ID" value="ACG74012.1"/>
    <property type="molecule type" value="Genomic_DNA"/>
</dbReference>
<dbReference type="RefSeq" id="WP_012526792.1">
    <property type="nucleotide sequence ID" value="NC_011145.1"/>
</dbReference>
<dbReference type="SMR" id="B4UIH9"/>
<dbReference type="MEROPS" id="T01.006"/>
<dbReference type="KEGG" id="ank:AnaeK_2787"/>
<dbReference type="HOGENOM" id="CLU_093872_1_0_7"/>
<dbReference type="OrthoDB" id="9804884at2"/>
<dbReference type="Proteomes" id="UP000001871">
    <property type="component" value="Chromosome"/>
</dbReference>
<dbReference type="GO" id="GO:0009376">
    <property type="term" value="C:HslUV protease complex"/>
    <property type="evidence" value="ECO:0007669"/>
    <property type="project" value="UniProtKB-UniRule"/>
</dbReference>
<dbReference type="GO" id="GO:0005839">
    <property type="term" value="C:proteasome core complex"/>
    <property type="evidence" value="ECO:0007669"/>
    <property type="project" value="InterPro"/>
</dbReference>
<dbReference type="GO" id="GO:0046872">
    <property type="term" value="F:metal ion binding"/>
    <property type="evidence" value="ECO:0007669"/>
    <property type="project" value="UniProtKB-KW"/>
</dbReference>
<dbReference type="GO" id="GO:0004298">
    <property type="term" value="F:threonine-type endopeptidase activity"/>
    <property type="evidence" value="ECO:0007669"/>
    <property type="project" value="UniProtKB-KW"/>
</dbReference>
<dbReference type="GO" id="GO:0051603">
    <property type="term" value="P:proteolysis involved in protein catabolic process"/>
    <property type="evidence" value="ECO:0007669"/>
    <property type="project" value="InterPro"/>
</dbReference>
<dbReference type="Gene3D" id="3.60.20.10">
    <property type="entry name" value="Glutamine Phosphoribosylpyrophosphate, subunit 1, domain 1"/>
    <property type="match status" value="1"/>
</dbReference>
<dbReference type="HAMAP" id="MF_00248">
    <property type="entry name" value="HslV"/>
    <property type="match status" value="1"/>
</dbReference>
<dbReference type="InterPro" id="IPR022281">
    <property type="entry name" value="ATP-dep_Prtase_HsIV_su"/>
</dbReference>
<dbReference type="InterPro" id="IPR029055">
    <property type="entry name" value="Ntn_hydrolases_N"/>
</dbReference>
<dbReference type="InterPro" id="IPR001353">
    <property type="entry name" value="Proteasome_sua/b"/>
</dbReference>
<dbReference type="InterPro" id="IPR023333">
    <property type="entry name" value="Proteasome_suB-type"/>
</dbReference>
<dbReference type="NCBIfam" id="TIGR03692">
    <property type="entry name" value="ATP_dep_HslV"/>
    <property type="match status" value="1"/>
</dbReference>
<dbReference type="NCBIfam" id="NF003964">
    <property type="entry name" value="PRK05456.1"/>
    <property type="match status" value="1"/>
</dbReference>
<dbReference type="PANTHER" id="PTHR32194:SF0">
    <property type="entry name" value="ATP-DEPENDENT PROTEASE SUBUNIT HSLV"/>
    <property type="match status" value="1"/>
</dbReference>
<dbReference type="PANTHER" id="PTHR32194">
    <property type="entry name" value="METALLOPROTEASE TLDD"/>
    <property type="match status" value="1"/>
</dbReference>
<dbReference type="Pfam" id="PF00227">
    <property type="entry name" value="Proteasome"/>
    <property type="match status" value="1"/>
</dbReference>
<dbReference type="PIRSF" id="PIRSF039093">
    <property type="entry name" value="HslV"/>
    <property type="match status" value="1"/>
</dbReference>
<dbReference type="SUPFAM" id="SSF56235">
    <property type="entry name" value="N-terminal nucleophile aminohydrolases (Ntn hydrolases)"/>
    <property type="match status" value="1"/>
</dbReference>
<dbReference type="PROSITE" id="PS51476">
    <property type="entry name" value="PROTEASOME_BETA_2"/>
    <property type="match status" value="1"/>
</dbReference>
<feature type="chain" id="PRO_1000100869" description="ATP-dependent protease subunit HslV">
    <location>
        <begin position="1"/>
        <end position="181"/>
    </location>
</feature>
<feature type="active site" evidence="1">
    <location>
        <position position="7"/>
    </location>
</feature>
<feature type="binding site" evidence="1">
    <location>
        <position position="166"/>
    </location>
    <ligand>
        <name>Na(+)</name>
        <dbReference type="ChEBI" id="CHEBI:29101"/>
    </ligand>
</feature>
<feature type="binding site" evidence="1">
    <location>
        <position position="169"/>
    </location>
    <ligand>
        <name>Na(+)</name>
        <dbReference type="ChEBI" id="CHEBI:29101"/>
    </ligand>
</feature>
<feature type="binding site" evidence="1">
    <location>
        <position position="172"/>
    </location>
    <ligand>
        <name>Na(+)</name>
        <dbReference type="ChEBI" id="CHEBI:29101"/>
    </ligand>
</feature>